<protein>
    <recommendedName>
        <fullName>EKC/KEOPS complex subunit BUD32</fullName>
        <ecNumber evidence="2">3.6.-.-</ecNumber>
    </recommendedName>
    <alternativeName>
        <fullName>Atypical serine/threonine protein kinase BUD32</fullName>
        <ecNumber evidence="1">2.7.11.1</ecNumber>
    </alternativeName>
</protein>
<accession>B7XIB8</accession>
<keyword id="KW-0010">Activator</keyword>
<keyword id="KW-0067">ATP-binding</keyword>
<keyword id="KW-0158">Chromosome</keyword>
<keyword id="KW-0963">Cytoplasm</keyword>
<keyword id="KW-0378">Hydrolase</keyword>
<keyword id="KW-0418">Kinase</keyword>
<keyword id="KW-0547">Nucleotide-binding</keyword>
<keyword id="KW-0539">Nucleus</keyword>
<keyword id="KW-0597">Phosphoprotein</keyword>
<keyword id="KW-0723">Serine/threonine-protein kinase</keyword>
<keyword id="KW-0779">Telomere</keyword>
<keyword id="KW-0804">Transcription</keyword>
<keyword id="KW-0805">Transcription regulation</keyword>
<keyword id="KW-0808">Transferase</keyword>
<keyword id="KW-0819">tRNA processing</keyword>
<evidence type="ECO:0000250" key="1">
    <source>
        <dbReference type="UniProtKB" id="P53323"/>
    </source>
</evidence>
<evidence type="ECO:0000250" key="2">
    <source>
        <dbReference type="UniProtKB" id="Q9UYB9"/>
    </source>
</evidence>
<evidence type="ECO:0000255" key="3">
    <source>
        <dbReference type="PROSITE-ProRule" id="PRU00159"/>
    </source>
</evidence>
<evidence type="ECO:0000255" key="4">
    <source>
        <dbReference type="PROSITE-ProRule" id="PRU10028"/>
    </source>
</evidence>
<evidence type="ECO:0000305" key="5"/>
<gene>
    <name type="primary">BUD32</name>
    <name type="ORF">EBI_24212</name>
</gene>
<dbReference type="EC" id="3.6.-.-" evidence="2"/>
<dbReference type="EC" id="2.7.11.1" evidence="1"/>
<dbReference type="EMBL" id="ABGB01000018">
    <property type="protein sequence ID" value="EED44276.1"/>
    <property type="molecule type" value="Genomic_DNA"/>
</dbReference>
<dbReference type="RefSeq" id="XP_002649746.1">
    <property type="nucleotide sequence ID" value="XM_002649700.1"/>
</dbReference>
<dbReference type="SMR" id="B7XIB8"/>
<dbReference type="FunCoup" id="B7XIB8">
    <property type="interactions" value="109"/>
</dbReference>
<dbReference type="STRING" id="481877.B7XIB8"/>
<dbReference type="VEuPathDB" id="MicrosporidiaDB:EBI_24212"/>
<dbReference type="HOGENOM" id="CLU_063953_2_0_1"/>
<dbReference type="InParanoid" id="B7XIB8"/>
<dbReference type="OMA" id="AYCEVHP"/>
<dbReference type="OrthoDB" id="3399at2759"/>
<dbReference type="GO" id="GO:0000781">
    <property type="term" value="C:chromosome, telomeric region"/>
    <property type="evidence" value="ECO:0007669"/>
    <property type="project" value="UniProtKB-SubCell"/>
</dbReference>
<dbReference type="GO" id="GO:0005829">
    <property type="term" value="C:cytosol"/>
    <property type="evidence" value="ECO:0007669"/>
    <property type="project" value="TreeGrafter"/>
</dbReference>
<dbReference type="GO" id="GO:0005634">
    <property type="term" value="C:nucleus"/>
    <property type="evidence" value="ECO:0007669"/>
    <property type="project" value="UniProtKB-SubCell"/>
</dbReference>
<dbReference type="GO" id="GO:0005524">
    <property type="term" value="F:ATP binding"/>
    <property type="evidence" value="ECO:0007669"/>
    <property type="project" value="UniProtKB-KW"/>
</dbReference>
<dbReference type="GO" id="GO:0016787">
    <property type="term" value="F:hydrolase activity"/>
    <property type="evidence" value="ECO:0007669"/>
    <property type="project" value="UniProtKB-KW"/>
</dbReference>
<dbReference type="GO" id="GO:0106310">
    <property type="term" value="F:protein serine kinase activity"/>
    <property type="evidence" value="ECO:0007669"/>
    <property type="project" value="RHEA"/>
</dbReference>
<dbReference type="GO" id="GO:0004674">
    <property type="term" value="F:protein serine/threonine kinase activity"/>
    <property type="evidence" value="ECO:0007669"/>
    <property type="project" value="UniProtKB-KW"/>
</dbReference>
<dbReference type="GO" id="GO:0008033">
    <property type="term" value="P:tRNA processing"/>
    <property type="evidence" value="ECO:0007669"/>
    <property type="project" value="UniProtKB-KW"/>
</dbReference>
<dbReference type="Gene3D" id="3.30.200.20">
    <property type="entry name" value="Phosphorylase Kinase, domain 1"/>
    <property type="match status" value="1"/>
</dbReference>
<dbReference type="Gene3D" id="1.10.510.10">
    <property type="entry name" value="Transferase(Phosphotransferase) domain 1"/>
    <property type="match status" value="1"/>
</dbReference>
<dbReference type="InterPro" id="IPR022495">
    <property type="entry name" value="Bud32"/>
</dbReference>
<dbReference type="InterPro" id="IPR011009">
    <property type="entry name" value="Kinase-like_dom_sf"/>
</dbReference>
<dbReference type="InterPro" id="IPR000719">
    <property type="entry name" value="Prot_kinase_dom"/>
</dbReference>
<dbReference type="InterPro" id="IPR018934">
    <property type="entry name" value="RIO_dom"/>
</dbReference>
<dbReference type="InterPro" id="IPR008266">
    <property type="entry name" value="Tyr_kinase_AS"/>
</dbReference>
<dbReference type="NCBIfam" id="TIGR03724">
    <property type="entry name" value="arch_bud32"/>
    <property type="match status" value="1"/>
</dbReference>
<dbReference type="PANTHER" id="PTHR12209:SF0">
    <property type="entry name" value="EKC_KEOPS COMPLEX SUBUNIT TP53RK"/>
    <property type="match status" value="1"/>
</dbReference>
<dbReference type="PANTHER" id="PTHR12209">
    <property type="entry name" value="NON-SPECIFIC SERINE/THREONINE PROTEIN KINASE"/>
    <property type="match status" value="1"/>
</dbReference>
<dbReference type="Pfam" id="PF01163">
    <property type="entry name" value="RIO1"/>
    <property type="match status" value="1"/>
</dbReference>
<dbReference type="SUPFAM" id="SSF56112">
    <property type="entry name" value="Protein kinase-like (PK-like)"/>
    <property type="match status" value="1"/>
</dbReference>
<dbReference type="PROSITE" id="PS50011">
    <property type="entry name" value="PROTEIN_KINASE_DOM"/>
    <property type="match status" value="1"/>
</dbReference>
<dbReference type="PROSITE" id="PS00109">
    <property type="entry name" value="PROTEIN_KINASE_TYR"/>
    <property type="match status" value="1"/>
</dbReference>
<reference key="1">
    <citation type="journal article" date="2007" name="PLoS ONE">
        <title>Patterns of genome evolution among the microsporidian parasites Encephalitozoon cuniculi, Antonospora locustae and Enterocytozoon bieneusi.</title>
        <authorList>
            <person name="Corradi N."/>
            <person name="Akiyoshi D.E."/>
            <person name="Morrison H.G."/>
            <person name="Feng X."/>
            <person name="Weiss L.M."/>
            <person name="Tzipori S."/>
            <person name="Keeling P.J."/>
        </authorList>
    </citation>
    <scope>NUCLEOTIDE SEQUENCE [LARGE SCALE GENOMIC DNA]</scope>
    <source>
        <strain>H348</strain>
    </source>
</reference>
<reference key="2">
    <citation type="journal article" date="2009" name="PLoS Pathog.">
        <title>Genomic survey of the non-cultivatable opportunistic human pathogen, Enterocytozoon bieneusi.</title>
        <authorList>
            <person name="Akiyoshi D.E."/>
            <person name="Morrison H.G."/>
            <person name="Lei S."/>
            <person name="Feng X."/>
            <person name="Zhang Q."/>
            <person name="Corradi N."/>
            <person name="Mayanja H."/>
            <person name="Tumwine J.K."/>
            <person name="Keeling P.J."/>
            <person name="Weiss L.M."/>
            <person name="Tzipori S."/>
        </authorList>
    </citation>
    <scope>NUCLEOTIDE SEQUENCE [LARGE SCALE GENOMIC DNA]</scope>
    <source>
        <strain>H348</strain>
    </source>
</reference>
<comment type="function">
    <text evidence="1">Component of the EKC/KEOPS complex that is required for the formation of a threonylcarbamoyl group on adenosine at position 37 (t(6)A37) in tRNAs that read codons beginning with adenine. The complex is probably involved in the transfer of the threonylcarbamoyl moiety of threonylcarbamoyl-AMP (TC-AMP) to the N6 group of A37. BUD32 has ATPase activity in the context of the EKC/KEOPS complex and likely plays a supporting role to the catalytic subunit KAE1. The EKC/KEOPS complex also promotes both telomere uncapping and telomere elongation. The complex is required for efficient recruitment of transcriptional coactivators.</text>
</comment>
<comment type="catalytic activity">
    <reaction evidence="1">
        <text>L-seryl-[protein] + ATP = O-phospho-L-seryl-[protein] + ADP + H(+)</text>
        <dbReference type="Rhea" id="RHEA:17989"/>
        <dbReference type="Rhea" id="RHEA-COMP:9863"/>
        <dbReference type="Rhea" id="RHEA-COMP:11604"/>
        <dbReference type="ChEBI" id="CHEBI:15378"/>
        <dbReference type="ChEBI" id="CHEBI:29999"/>
        <dbReference type="ChEBI" id="CHEBI:30616"/>
        <dbReference type="ChEBI" id="CHEBI:83421"/>
        <dbReference type="ChEBI" id="CHEBI:456216"/>
        <dbReference type="EC" id="2.7.11.1"/>
    </reaction>
</comment>
<comment type="catalytic activity">
    <reaction evidence="1">
        <text>L-threonyl-[protein] + ATP = O-phospho-L-threonyl-[protein] + ADP + H(+)</text>
        <dbReference type="Rhea" id="RHEA:46608"/>
        <dbReference type="Rhea" id="RHEA-COMP:11060"/>
        <dbReference type="Rhea" id="RHEA-COMP:11605"/>
        <dbReference type="ChEBI" id="CHEBI:15378"/>
        <dbReference type="ChEBI" id="CHEBI:30013"/>
        <dbReference type="ChEBI" id="CHEBI:30616"/>
        <dbReference type="ChEBI" id="CHEBI:61977"/>
        <dbReference type="ChEBI" id="CHEBI:456216"/>
        <dbReference type="EC" id="2.7.11.1"/>
    </reaction>
</comment>
<comment type="subunit">
    <text evidence="1">Component of the EKC/KEOPS complex composed of at least BUD32, CGI121, GON7, KAE1 and PCC1; the whole complex dimerizes.</text>
</comment>
<comment type="subcellular location">
    <subcellularLocation>
        <location evidence="1">Cytoplasm</location>
    </subcellularLocation>
    <subcellularLocation>
        <location evidence="1">Nucleus</location>
    </subcellularLocation>
    <subcellularLocation>
        <location evidence="1">Chromosome</location>
        <location evidence="1">Telomere</location>
    </subcellularLocation>
</comment>
<comment type="domain">
    <text evidence="1 2">This protein is considered an atypical serine/threonine kinase, because it lacks the conventional structural elements necessary for the substrate recognition as well as a lysine residue that in all other serine/threonine kinases participates in the catalytic event (By similarity). BUD32 has protein kinase activity in vitro, but in the context of the EKC/KEOPS complex, the catalytic subunit KAE1 switches the activity of BUD32 from kinase into ATPase (By similarity).</text>
</comment>
<comment type="similarity">
    <text evidence="5">Belongs to the protein kinase superfamily. BUD32 family.</text>
</comment>
<proteinExistence type="inferred from homology"/>
<sequence>MILITSGAEAEIYESENMIIKRRVKKNYRIDELDSMLNKTRTKREVNIIKKLNALNIPSPMFYTTNKYDIVMEKIKGIPVKNILNNESLTSNQFLNKICAKTHKDILIEIGNIVYAMHNNNIIHGDLTTLNFIYSDKIHIIDFGLSFYSNKDEDKAVDLYLFEKSLISVHNEEFVSYFYSGYIVNETLNKKLLEIRKRGRKRE</sequence>
<feature type="chain" id="PRO_0000385502" description="EKC/KEOPS complex subunit BUD32">
    <location>
        <begin position="1"/>
        <end position="203"/>
    </location>
</feature>
<feature type="domain" description="Protein kinase" evidence="3">
    <location>
        <begin position="1"/>
        <end position="203"/>
    </location>
</feature>
<feature type="active site" description="Proton acceptor" evidence="3 4">
    <location>
        <position position="126"/>
    </location>
</feature>
<feature type="binding site" evidence="3">
    <location>
        <begin position="4"/>
        <end position="12"/>
    </location>
    <ligand>
        <name>ATP</name>
        <dbReference type="ChEBI" id="CHEBI:30616"/>
    </ligand>
</feature>
<feature type="binding site" evidence="3">
    <location>
        <position position="26"/>
    </location>
    <ligand>
        <name>ATP</name>
        <dbReference type="ChEBI" id="CHEBI:30616"/>
    </ligand>
</feature>
<name>BUD32_ENTBH</name>
<organism>
    <name type="scientific">Enterocytozoon bieneusi (strain H348)</name>
    <name type="common">Microsporidian parasite</name>
    <dbReference type="NCBI Taxonomy" id="481877"/>
    <lineage>
        <taxon>Eukaryota</taxon>
        <taxon>Fungi</taxon>
        <taxon>Fungi incertae sedis</taxon>
        <taxon>Microsporidia</taxon>
        <taxon>Enterocytozoonidae</taxon>
        <taxon>Enterocytozoon</taxon>
    </lineage>
</organism>